<feature type="chain" id="PRO_0000043029" description="Virion infectivity factor" evidence="2">
    <location>
        <begin position="1"/>
        <end position="192"/>
    </location>
</feature>
<feature type="chain" id="PRO_0000043030" description="p17" evidence="2">
    <location>
        <begin position="1"/>
        <end position="150"/>
    </location>
</feature>
<feature type="chain" id="PRO_0000043031" description="p7" evidence="2">
    <location>
        <begin position="151"/>
        <end position="192"/>
    </location>
</feature>
<feature type="region of interest" description="Interaction with host APOBEC3F; F1-box" evidence="2">
    <location>
        <begin position="14"/>
        <end position="17"/>
    </location>
</feature>
<feature type="region of interest" description="Interaction with host APOBEC3G; G-box" evidence="2">
    <location>
        <begin position="40"/>
        <end position="44"/>
    </location>
</feature>
<feature type="region of interest" description="Interaction with host APOBEC3F and APOBEC3G; FG-box" evidence="2">
    <location>
        <begin position="54"/>
        <end position="72"/>
    </location>
</feature>
<feature type="region of interest" description="Interaction with host APOBEC3F; F2-box" evidence="2">
    <location>
        <begin position="74"/>
        <end position="79"/>
    </location>
</feature>
<feature type="region of interest" description="RNA-binding" evidence="2">
    <location>
        <begin position="75"/>
        <end position="114"/>
    </location>
</feature>
<feature type="region of interest" description="SOCS box-like" evidence="2">
    <location>
        <begin position="151"/>
        <end position="180"/>
    </location>
</feature>
<feature type="region of interest" description="Multimerization" evidence="2">
    <location>
        <begin position="151"/>
        <end position="164"/>
    </location>
</feature>
<feature type="region of interest" description="Disordered" evidence="3">
    <location>
        <begin position="164"/>
        <end position="192"/>
    </location>
</feature>
<feature type="region of interest" description="Membrane association" evidence="2">
    <location>
        <begin position="171"/>
        <end position="172"/>
    </location>
</feature>
<feature type="short sequence motif" description="HCCH motif" evidence="2">
    <location>
        <begin position="108"/>
        <end position="139"/>
    </location>
</feature>
<feature type="short sequence motif" description="BC-box-like motif" evidence="2">
    <location>
        <begin position="144"/>
        <end position="153"/>
    </location>
</feature>
<feature type="compositionally biased region" description="Basic residues" evidence="3">
    <location>
        <begin position="176"/>
        <end position="186"/>
    </location>
</feature>
<feature type="binding site" evidence="2">
    <location>
        <position position="108"/>
    </location>
    <ligand>
        <name>Zn(2+)</name>
        <dbReference type="ChEBI" id="CHEBI:29105"/>
    </ligand>
</feature>
<feature type="binding site" evidence="2">
    <location>
        <position position="114"/>
    </location>
    <ligand>
        <name>Zn(2+)</name>
        <dbReference type="ChEBI" id="CHEBI:29105"/>
    </ligand>
</feature>
<feature type="binding site" evidence="2">
    <location>
        <position position="133"/>
    </location>
    <ligand>
        <name>Zn(2+)</name>
        <dbReference type="ChEBI" id="CHEBI:29105"/>
    </ligand>
</feature>
<feature type="binding site" evidence="2">
    <location>
        <position position="139"/>
    </location>
    <ligand>
        <name>Zn(2+)</name>
        <dbReference type="ChEBI" id="CHEBI:29105"/>
    </ligand>
</feature>
<feature type="site" description="Cleavage in virion (by viral protease)" evidence="2">
    <location>
        <begin position="150"/>
        <end position="151"/>
    </location>
</feature>
<feature type="modified residue" description="Phosphothreonine; by host MAP4K1" evidence="2">
    <location>
        <position position="96"/>
    </location>
</feature>
<feature type="modified residue" description="Phosphoserine; by host" evidence="2">
    <location>
        <position position="144"/>
    </location>
</feature>
<feature type="modified residue" description="Phosphothreonine; by host" evidence="2">
    <location>
        <position position="155"/>
    </location>
</feature>
<feature type="modified residue" description="Phosphoserine; by host MAP4K1" evidence="2">
    <location>
        <position position="165"/>
    </location>
</feature>
<feature type="modified residue" description="Phosphothreonine; by host" evidence="2">
    <location>
        <position position="188"/>
    </location>
</feature>
<organismHost>
    <name type="scientific">Homo sapiens</name>
    <name type="common">Human</name>
    <dbReference type="NCBI Taxonomy" id="9606"/>
</organismHost>
<proteinExistence type="evidence at protein level"/>
<sequence length="192" mass="22513">MENRWQVMIVWQVDRMRIRTWKSLVKHHMYVSGKARGWFYRHHYESPHPRISSEVHIPLGDARLVITTYWGLHTGERDWHLGQGVSIEWRKKRYSTQVDPELADQLIHLYYFDCFSDSAIRKALLGHIVSPRCEYQAGHNKVGSLQYLALAALITPKKIKPPLPSVTKLTEDRWNKPQKTKGHRGSHTMNGH</sequence>
<keyword id="KW-0014">AIDS</keyword>
<keyword id="KW-1032">Host cell membrane</keyword>
<keyword id="KW-1035">Host cytoplasm</keyword>
<keyword id="KW-1043">Host membrane</keyword>
<keyword id="KW-0945">Host-virus interaction</keyword>
<keyword id="KW-0472">Membrane</keyword>
<keyword id="KW-0479">Metal-binding</keyword>
<keyword id="KW-0597">Phosphoprotein</keyword>
<keyword id="KW-1185">Reference proteome</keyword>
<keyword id="KW-0694">RNA-binding</keyword>
<keyword id="KW-0832">Ubl conjugation</keyword>
<keyword id="KW-0833">Ubl conjugation pathway</keyword>
<keyword id="KW-0946">Virion</keyword>
<keyword id="KW-0862">Zinc</keyword>
<name>VIF_HV1BR</name>
<comment type="function">
    <text evidence="2">Counteracts the innate antiviral activity of host APOBEC3F and APOBEC3G by promoting their ubiquitination and degradation. Acts as a substrate recognition component of an E3 ubiquitin-protein ligase complex: mechanistically, Vif hijacks a host cullin-5-RING E3 ubiquitin-protein ligase complex (ECS complex) and the transcription coactivator CBFB/CBF-beta to form an active E3 ubiquitin-protein ligase complex that targets APOBEC3G and APOBEC3F for polyubiquitination, leading to their degradation by the proteasome. Vif interaction with APOBEC3G also blocks its cytidine deaminase activity in a proteasome-independent manner, suggesting a dual inhibitory mechanism. May interact directly with APOBEC3G mRNA in order to inhibit its translation. Association with CBFB/CBF-beta also inhibits the transcription coactivator activity of CBFB/CBF-beta. Seems to play a role in viral morphology by affecting the stability of the viral nucleoprotein core. Finally, Vif also contributes to the G2 cell cycle arrest observed in HIV infected cells.</text>
</comment>
<comment type="subunit">
    <text evidence="1">Homomultimer; in vitro and presumably in vivo. Interacts with viral RNA and Pr55Gag precursor; these interactions mediate Vif incorporation into the virion. Interacts with the viral reverse transcriptase. Forms cullin-5-RING E3 ubiquitin-protein ligase complex (ECS complex) by interacting with host CUL5, RBX2, elongin BC complex (ELOB and ELOC) and CBFB/CBF-beta. Within the ECS complex, Vif interacts directly with host CUL5, ELOC and APOBEC (APOBEC3F and APOBEC3G) substrates. The ECS complex also contains some single-stranded RNA (ssRNA) that acts as a glue that bridges Vif with APOBEC (APOBEC3F and APOBEC3G) substrates. Interacts with host UBCE7IP1 isoform 3/ZIN and possibly with SAT. Interacts with host tyrosine kinases HCK and FYN; these interactions may decrease level of phosphorylated APOBEC3G incorporation into virions. Interacts with host ABCE1; this interaction may play a role in protecting viral RNA from damage during viral assembly. Interacts with host MDM2; this interaction targets Vif for degradation by the proteasome.</text>
</comment>
<comment type="subcellular location">
    <subcellularLocation>
        <location evidence="2">Host cytoplasm</location>
    </subcellularLocation>
    <subcellularLocation>
        <location evidence="2">Host cell membrane</location>
        <topology evidence="2">Peripheral membrane protein</topology>
        <orientation evidence="2">Cytoplasmic side</orientation>
    </subcellularLocation>
    <subcellularLocation>
        <location evidence="2">Virion</location>
    </subcellularLocation>
    <text evidence="2">In the cytoplasm, seems to colocalize with intermediate filament vimentin. A fraction is associated with the cytoplasmic side of cellular membranes, presumably via the interaction with Pr55Gag precursor. Incorporated in virions at a ratio of approximately 7 to 20 molecules per virion.</text>
</comment>
<comment type="induction">
    <text evidence="2">Expressed late during infection in a Rev-dependent manner.</text>
</comment>
<comment type="domain">
    <text evidence="2">The BC-like-box motif mediates the interaction with elongin BC complex.</text>
</comment>
<comment type="domain">
    <text evidence="2">The HCCH motif (H-x(5)-C-x(18)-C-x(5)-H) mediates the interaction with CUL5.</text>
</comment>
<comment type="PTM">
    <text evidence="2">Processed in virion by the viral protease.</text>
</comment>
<comment type="PTM">
    <text evidence="2">Highly phosphorylated on serine and threonine residues.</text>
</comment>
<comment type="PTM">
    <text evidence="2">Polyubiquitinated and degraded by the proteasome in the presence of APOBEC3G.</text>
</comment>
<comment type="miscellaneous">
    <text evidence="2">Vif-defective viruses show catastrophic failure in reverse transcription due to APOBEC-induced mutations that initiate a DNA base repair pathway and compromise the structural integrity of the ssDNA. In the absence of Vif, the virion is morphologically abnormal.</text>
</comment>
<comment type="miscellaneous">
    <text evidence="2">HIV-1 lineages are divided in three main groups, M (for Major), O (for Outlier), and N (for New, or Non-M, Non-O). The vast majority of strains found worldwide belong to the group M. Group O seems to be endemic to and largely confined to Cameroon and neighboring countries in West Central Africa, where these viruses represent a small minority of HIV-1 strains. The group N is represented by a limited number of isolates from Cameroonian persons. The group M is further subdivided in 9 clades or subtypes (A to D, F to H, J and K).</text>
</comment>
<comment type="miscellaneous">
    <text evidence="2">Required for replication in 'nonpermissive' cells, including primary T-cells, macrophages and certain T-cell lines, but is dispensable for replication in 'permissive' cell lines, such as 293T cells. In nonpermissive cells, Vif-defective viruses can produce virions, but they fail to complete reverse transcription and cannot successfully infect new cells.</text>
</comment>
<comment type="similarity">
    <text evidence="2">Belongs to the primate lentivirus group Vif protein family.</text>
</comment>
<organism>
    <name type="scientific">Human immunodeficiency virus type 1 group M subtype B (isolate BRU/LAI)</name>
    <name type="common">HIV-1</name>
    <dbReference type="NCBI Taxonomy" id="11686"/>
    <lineage>
        <taxon>Viruses</taxon>
        <taxon>Riboviria</taxon>
        <taxon>Pararnavirae</taxon>
        <taxon>Artverviricota</taxon>
        <taxon>Revtraviricetes</taxon>
        <taxon>Ortervirales</taxon>
        <taxon>Retroviridae</taxon>
        <taxon>Orthoretrovirinae</taxon>
        <taxon>Lentivirus</taxon>
        <taxon>Human immunodeficiency virus type 1</taxon>
    </lineage>
</organism>
<accession>P69721</accession>
<accession>P03401</accession>
<dbReference type="EMBL" id="K02013">
    <property type="protein sequence ID" value="AAB59748.1"/>
    <property type="molecule type" value="Genomic_RNA"/>
</dbReference>
<dbReference type="EMBL" id="A04321">
    <property type="protein sequence ID" value="CAA00351.1"/>
    <property type="molecule type" value="Unassigned_RNA"/>
</dbReference>
<dbReference type="RefSeq" id="NP_057851.1">
    <property type="nucleotide sequence ID" value="NC_001802.1"/>
</dbReference>
<dbReference type="SMR" id="P69721"/>
<dbReference type="BioGRID" id="1205539">
    <property type="interactions" value="64"/>
</dbReference>
<dbReference type="GeneID" id="155459"/>
<dbReference type="KEGG" id="vg:155459"/>
<dbReference type="Proteomes" id="UP000007692">
    <property type="component" value="Genome"/>
</dbReference>
<dbReference type="GO" id="GO:0030430">
    <property type="term" value="C:host cell cytoplasm"/>
    <property type="evidence" value="ECO:0007669"/>
    <property type="project" value="UniProtKB-SubCell"/>
</dbReference>
<dbReference type="GO" id="GO:0020002">
    <property type="term" value="C:host cell plasma membrane"/>
    <property type="evidence" value="ECO:0007669"/>
    <property type="project" value="UniProtKB-SubCell"/>
</dbReference>
<dbReference type="GO" id="GO:0016020">
    <property type="term" value="C:membrane"/>
    <property type="evidence" value="ECO:0007669"/>
    <property type="project" value="UniProtKB-UniRule"/>
</dbReference>
<dbReference type="GO" id="GO:0044423">
    <property type="term" value="C:virion component"/>
    <property type="evidence" value="ECO:0007669"/>
    <property type="project" value="UniProtKB-UniRule"/>
</dbReference>
<dbReference type="GO" id="GO:0046872">
    <property type="term" value="F:metal ion binding"/>
    <property type="evidence" value="ECO:0007669"/>
    <property type="project" value="UniProtKB-KW"/>
</dbReference>
<dbReference type="GO" id="GO:0003723">
    <property type="term" value="F:RNA binding"/>
    <property type="evidence" value="ECO:0007669"/>
    <property type="project" value="UniProtKB-UniRule"/>
</dbReference>
<dbReference type="GO" id="GO:0019058">
    <property type="term" value="P:viral life cycle"/>
    <property type="evidence" value="ECO:0007669"/>
    <property type="project" value="InterPro"/>
</dbReference>
<dbReference type="HAMAP" id="MF_04081">
    <property type="entry name" value="HIV_VIF"/>
    <property type="match status" value="1"/>
</dbReference>
<dbReference type="InterPro" id="IPR000475">
    <property type="entry name" value="Vif"/>
</dbReference>
<dbReference type="Pfam" id="PF00559">
    <property type="entry name" value="Vif"/>
    <property type="match status" value="1"/>
</dbReference>
<dbReference type="PRINTS" id="PR00349">
    <property type="entry name" value="VIRIONINFFCT"/>
</dbReference>
<reference key="1">
    <citation type="journal article" date="1985" name="Cell">
        <title>Nucleotide sequence of the AIDS virus, LAV.</title>
        <authorList>
            <person name="Wain-Hobson S."/>
            <person name="Sonigo P."/>
            <person name="Danos O."/>
            <person name="Cole S."/>
            <person name="Alizon M."/>
        </authorList>
    </citation>
    <scope>NUCLEOTIDE SEQUENCE [GENOMIC RNA]</scope>
</reference>
<reference key="2">
    <citation type="journal article" date="2002" name="Nature">
        <title>Identification of a host protein essential for assembly of immature HIV-1 capsids.</title>
        <authorList>
            <person name="Zimmerman C."/>
            <person name="Klein K.C."/>
            <person name="Kiser P.K."/>
            <person name="Singh A.R."/>
            <person name="Firestein B.L."/>
            <person name="Riba S.C."/>
            <person name="Lingappa J.R."/>
        </authorList>
    </citation>
    <scope>INTERACTION WITH HUMAN ABCE1</scope>
</reference>
<reference key="3">
    <citation type="journal article" date="2004" name="Trends Mol. Med.">
        <title>The viral infectivity factor (Vif) of HIV-1 unveiled.</title>
        <authorList>
            <person name="Rose K.M."/>
            <person name="Marin M."/>
            <person name="Kozak S.L."/>
            <person name="Kabat D."/>
        </authorList>
    </citation>
    <scope>REVIEW</scope>
</reference>
<gene>
    <name evidence="2" type="primary">vif</name>
</gene>
<protein>
    <recommendedName>
        <fullName evidence="2">Virion infectivity factor</fullName>
        <shortName evidence="2">Vif</shortName>
    </recommendedName>
    <alternativeName>
        <fullName evidence="2">SOR protein</fullName>
    </alternativeName>
    <component>
        <recommendedName>
            <fullName evidence="2">p17</fullName>
        </recommendedName>
    </component>
    <component>
        <recommendedName>
            <fullName evidence="2">p7</fullName>
        </recommendedName>
    </component>
</protein>
<evidence type="ECO:0000250" key="1">
    <source>
        <dbReference type="UniProtKB" id="O70897"/>
    </source>
</evidence>
<evidence type="ECO:0000255" key="2">
    <source>
        <dbReference type="HAMAP-Rule" id="MF_04081"/>
    </source>
</evidence>
<evidence type="ECO:0000256" key="3">
    <source>
        <dbReference type="SAM" id="MobiDB-lite"/>
    </source>
</evidence>